<comment type="function">
    <text evidence="2">Plays an essential role in viral RNA transcription and replication by forming the heterotrimeric polymerase complex together with PB1 and PB2 subunits. The complex transcribes viral mRNAs by using a unique mechanism called cap-snatching. It consists in the hijacking and cleavage of host capped pre-mRNAs. These short capped RNAs are then used as primers for viral mRNAs. The PB2 subunit is responsible for the binding of the 5' cap of cellular pre-mRNAs which are subsequently cleaved after 10-13 nucleotides by the PA subunit that carries the endonuclease activity.</text>
</comment>
<comment type="cofactor">
    <cofactor evidence="2">
        <name>Mn(2+)</name>
        <dbReference type="ChEBI" id="CHEBI:29035"/>
    </cofactor>
    <text evidence="2">Binds 2 manganese ions per subunit.</text>
</comment>
<comment type="subunit">
    <text evidence="1 2">Influenza RNA polymerase is composed of three subunits: PB1, PB2 and PA. Interacts (via C-terminus) with PB1 (via N-terminus).</text>
</comment>
<comment type="subcellular location">
    <subcellularLocation>
        <location evidence="2">Host cytoplasm</location>
    </subcellularLocation>
    <subcellularLocation>
        <location evidence="2">Host nucleus</location>
    </subcellularLocation>
    <text evidence="1 2">PB1 and PA are transported in the host nucleus as a complex.</text>
</comment>
<comment type="alternative products">
    <event type="ribosomal frameshifting"/>
    <isoform>
        <id>Q6J835-1</id>
        <name>PA</name>
        <sequence type="displayed"/>
    </isoform>
    <isoform>
        <id>P0CK73-1</id>
        <name>PA-X</name>
        <sequence type="external"/>
    </isoform>
</comment>
<comment type="PTM">
    <text evidence="1 2">Phosphorylated on serines and threonines by host kinases, including human casein kinase II.</text>
</comment>
<comment type="similarity">
    <text evidence="2">Belongs to the influenza viruses PA family.</text>
</comment>
<protein>
    <recommendedName>
        <fullName evidence="2">Polymerase acidic protein</fullName>
        <ecNumber evidence="2">3.1.-.-</ecNumber>
    </recommendedName>
    <alternativeName>
        <fullName evidence="2">RNA-directed RNA polymerase subunit P2</fullName>
    </alternativeName>
</protein>
<accession>Q6J835</accession>
<keyword id="KW-1157">Cap snatching</keyword>
<keyword id="KW-0255">Endonuclease</keyword>
<keyword id="KW-1262">Eukaryotic host gene expression shutoff by virus</keyword>
<keyword id="KW-1191">Eukaryotic host transcription shutoff by virus</keyword>
<keyword id="KW-1035">Host cytoplasm</keyword>
<keyword id="KW-1190">Host gene expression shutoff by virus</keyword>
<keyword id="KW-1048">Host nucleus</keyword>
<keyword id="KW-0945">Host-virus interaction</keyword>
<keyword id="KW-0378">Hydrolase</keyword>
<keyword id="KW-1104">Inhibition of host RNA polymerase II by virus</keyword>
<keyword id="KW-0464">Manganese</keyword>
<keyword id="KW-0479">Metal-binding</keyword>
<keyword id="KW-0540">Nuclease</keyword>
<keyword id="KW-0597">Phosphoprotein</keyword>
<keyword id="KW-0688">Ribosomal frameshifting</keyword>
<dbReference type="EC" id="3.1.-.-" evidence="2"/>
<dbReference type="EMBL" id="AY576413">
    <property type="protein sequence ID" value="AAT39062.2"/>
    <property type="molecule type" value="Genomic_DNA"/>
</dbReference>
<dbReference type="SMR" id="Q6J835"/>
<dbReference type="GO" id="GO:0030430">
    <property type="term" value="C:host cell cytoplasm"/>
    <property type="evidence" value="ECO:0007669"/>
    <property type="project" value="UniProtKB-SubCell"/>
</dbReference>
<dbReference type="GO" id="GO:0042025">
    <property type="term" value="C:host cell nucleus"/>
    <property type="evidence" value="ECO:0007669"/>
    <property type="project" value="UniProtKB-SubCell"/>
</dbReference>
<dbReference type="GO" id="GO:0004519">
    <property type="term" value="F:endonuclease activity"/>
    <property type="evidence" value="ECO:0007669"/>
    <property type="project" value="UniProtKB-KW"/>
</dbReference>
<dbReference type="GO" id="GO:0046872">
    <property type="term" value="F:metal ion binding"/>
    <property type="evidence" value="ECO:0007669"/>
    <property type="project" value="UniProtKB-KW"/>
</dbReference>
<dbReference type="GO" id="GO:0003723">
    <property type="term" value="F:RNA binding"/>
    <property type="evidence" value="ECO:0007669"/>
    <property type="project" value="UniProtKB-UniRule"/>
</dbReference>
<dbReference type="GO" id="GO:0075526">
    <property type="term" value="P:cap snatching"/>
    <property type="evidence" value="ECO:0007669"/>
    <property type="project" value="UniProtKB-UniRule"/>
</dbReference>
<dbReference type="GO" id="GO:0006351">
    <property type="term" value="P:DNA-templated transcription"/>
    <property type="evidence" value="ECO:0007669"/>
    <property type="project" value="UniProtKB-UniRule"/>
</dbReference>
<dbReference type="GO" id="GO:0039657">
    <property type="term" value="P:symbiont-mediated suppression of host gene expression"/>
    <property type="evidence" value="ECO:0007669"/>
    <property type="project" value="UniProtKB-KW"/>
</dbReference>
<dbReference type="GO" id="GO:0039523">
    <property type="term" value="P:symbiont-mediated suppression of host mRNA transcription via inhibition of RNA polymerase II activity"/>
    <property type="evidence" value="ECO:0007669"/>
    <property type="project" value="UniProtKB-UniRule"/>
</dbReference>
<dbReference type="GO" id="GO:0039694">
    <property type="term" value="P:viral RNA genome replication"/>
    <property type="evidence" value="ECO:0007669"/>
    <property type="project" value="InterPro"/>
</dbReference>
<dbReference type="GO" id="GO:0075523">
    <property type="term" value="P:viral translational frameshifting"/>
    <property type="evidence" value="ECO:0007669"/>
    <property type="project" value="UniProtKB-KW"/>
</dbReference>
<dbReference type="FunFam" id="3.40.91.90:FF:000001">
    <property type="entry name" value="Polymerase acidic protein"/>
    <property type="match status" value="1"/>
</dbReference>
<dbReference type="Gene3D" id="3.40.91.90">
    <property type="entry name" value="Influenza RNA-dependent RNA polymerase subunit PA, endonuclease domain"/>
    <property type="match status" value="1"/>
</dbReference>
<dbReference type="HAMAP" id="MF_04063">
    <property type="entry name" value="INFV_PA"/>
    <property type="match status" value="1"/>
</dbReference>
<dbReference type="InterPro" id="IPR037534">
    <property type="entry name" value="INFV_PA"/>
</dbReference>
<dbReference type="InterPro" id="IPR001009">
    <property type="entry name" value="PA/PA-X"/>
</dbReference>
<dbReference type="InterPro" id="IPR038372">
    <property type="entry name" value="PA/PA-X_sf"/>
</dbReference>
<dbReference type="Pfam" id="PF00603">
    <property type="entry name" value="Flu_PA"/>
    <property type="match status" value="1"/>
</dbReference>
<evidence type="ECO:0000250" key="1">
    <source>
        <dbReference type="UniProtKB" id="P03433"/>
    </source>
</evidence>
<evidence type="ECO:0000255" key="2">
    <source>
        <dbReference type="HAMAP-Rule" id="MF_04063"/>
    </source>
</evidence>
<feature type="chain" id="PRO_0000311137" description="Polymerase acidic protein">
    <location>
        <begin position="1"/>
        <end position="716"/>
    </location>
</feature>
<feature type="short sequence motif" description="Nuclear localization signal 1 (NLS1)" evidence="1 2">
    <location>
        <begin position="124"/>
        <end position="139"/>
    </location>
</feature>
<feature type="short sequence motif" description="Nuclear localization signal 2 (NLS2)" evidence="1 2">
    <location>
        <begin position="184"/>
        <end position="247"/>
    </location>
</feature>
<feature type="binding site" evidence="2">
    <location>
        <position position="41"/>
    </location>
    <ligand>
        <name>Mn(2+)</name>
        <dbReference type="ChEBI" id="CHEBI:29035"/>
        <label>1</label>
    </ligand>
</feature>
<feature type="binding site" evidence="2">
    <location>
        <position position="80"/>
    </location>
    <ligand>
        <name>Mn(2+)</name>
        <dbReference type="ChEBI" id="CHEBI:29035"/>
        <label>2</label>
    </ligand>
</feature>
<feature type="binding site" evidence="2">
    <location>
        <position position="108"/>
    </location>
    <ligand>
        <name>Mn(2+)</name>
        <dbReference type="ChEBI" id="CHEBI:29035"/>
        <label>1</label>
    </ligand>
</feature>
<feature type="binding site" evidence="2">
    <location>
        <position position="108"/>
    </location>
    <ligand>
        <name>Mn(2+)</name>
        <dbReference type="ChEBI" id="CHEBI:29035"/>
        <label>2</label>
    </ligand>
</feature>
<feature type="binding site" evidence="2">
    <location>
        <position position="119"/>
    </location>
    <ligand>
        <name>Mn(2+)</name>
        <dbReference type="ChEBI" id="CHEBI:29035"/>
        <label>1</label>
    </ligand>
</feature>
<feature type="binding site" evidence="2">
    <location>
        <position position="120"/>
    </location>
    <ligand>
        <name>Mn(2+)</name>
        <dbReference type="ChEBI" id="CHEBI:29035"/>
        <label>1</label>
    </ligand>
</feature>
<proteinExistence type="inferred from homology"/>
<organismHost>
    <name type="scientific">Aves</name>
    <dbReference type="NCBI Taxonomy" id="8782"/>
</organismHost>
<organismHost>
    <name type="scientific">Felis catus</name>
    <name type="common">Cat</name>
    <name type="synonym">Felis silvestris catus</name>
    <dbReference type="NCBI Taxonomy" id="9685"/>
</organismHost>
<organismHost>
    <name type="scientific">Homo sapiens</name>
    <name type="common">Human</name>
    <dbReference type="NCBI Taxonomy" id="9606"/>
</organismHost>
<organismHost>
    <name type="scientific">Panthera pardus</name>
    <name type="common">Leopard</name>
    <name type="synonym">Felis pardus</name>
    <dbReference type="NCBI Taxonomy" id="9691"/>
</organismHost>
<organismHost>
    <name type="scientific">Panthera tigris</name>
    <name type="common">Tiger</name>
    <dbReference type="NCBI Taxonomy" id="9694"/>
</organismHost>
<organismHost>
    <name type="scientific">Sus scrofa</name>
    <name type="common">Pig</name>
    <dbReference type="NCBI Taxonomy" id="9823"/>
</organismHost>
<sequence length="716" mass="82457">MEDFVRQCFNPMIVELTEKAMKEYGEDPKIETNKFAAICTHLEVCFMYSDFHFIDERSESIIVESGDPNALLKHRFEIIEGRDRTMAWTVVNSICNTTGVEKPKFIPDLYDYKENRFIEIGVTRREVHTYYLEKANKIKSEKTHIHIFSFTGEEMATKADYTLDEESRARIKTRLFTIRQEMASRGLWDSFRQSERGEETIEEKFEITGTMRRLADQSLPPNFSSLENFRAYVDGFEPNGCIEGKLSQMSKEVNARIEPFLKTTPRPLRLPDGPPCSQRSKFLLMDALKLSIEDPSHEGEGIPLYDAIKCMKTFFGWKEPNIVKPHKKGINPNYLLAWKQVLAELQDIENEEKIPKTKNMKKTGQLKWALGENMAPEKVDFEDCKDVSDLRQYDSDEPESRSLASWIQSEFNKACELTDSSWIELDEIGEDVAPIEHIASMRRNYFTAEVSHCRATEYIMKGVYINTALLNASCAAMDDFQLIPMISKCRTKEGRRKTNLYGFIIKGRSHLRNDTDVVNFVSMEFSLTDPRLEPHKWEKYCVLEIGDMLLRTAVGQVSRPMFLYVRTNGTSKIKMKWGMEMRRCLLQSLQQIESMIEAESSVKEKDMTKEFFENKSETWPIGESPKGVEEGSIGKVCRTLLAKSVFNSLYASPQLEGFSAESRKLLLIAQALRDNLEPGTFDLGGLYEAIEECLINDPWVLLNASWFNSFLAHALK</sequence>
<reference key="1">
    <citation type="journal article" date="2004" name="Proc. Natl. Acad. Sci. U.S.A.">
        <title>H5N1 influenza: a protean pandemic threat.</title>
        <authorList>
            <person name="Guan Y."/>
            <person name="Poon L.L.M."/>
            <person name="Cheung C.Y."/>
            <person name="Ellis T.M."/>
            <person name="Lim W."/>
            <person name="Lipatov A.S."/>
            <person name="Chan K.H."/>
            <person name="Sturm-Ramirez K.M."/>
            <person name="Cheung C.L."/>
            <person name="Leung Y.H.C."/>
            <person name="Yuen K.Y."/>
            <person name="Webster R.G."/>
            <person name="Peiris J.S.M."/>
        </authorList>
    </citation>
    <scope>NUCLEOTIDE SEQUENCE [GENOMIC RNA]</scope>
</reference>
<reference key="2">
    <citation type="submission" date="2008-03" db="EMBL/GenBank/DDBJ databases">
        <authorList>
            <person name="Guan Y."/>
            <person name="Poon L.L.M."/>
            <person name="Cheung C.Y."/>
            <person name="Ellis T.M."/>
            <person name="Lim W."/>
            <person name="Lipatov A.S."/>
            <person name="Chan K.H."/>
            <person name="Sturm-Ramirez K.M."/>
            <person name="Cheung C.L."/>
            <person name="Leung Y.H.C."/>
            <person name="Yuen K.Y."/>
            <person name="Webster R.G."/>
            <person name="Peiris J.S.M."/>
        </authorList>
    </citation>
    <scope>SEQUENCE REVISION</scope>
</reference>
<name>PA_I02A5</name>
<gene>
    <name evidence="2" type="primary">PA</name>
</gene>
<organism>
    <name type="scientific">Influenza A virus (strain A/Chicken/Hong Kong/96.1/2002 H5N1 genotype Y)</name>
    <dbReference type="NCBI Taxonomy" id="279803"/>
    <lineage>
        <taxon>Viruses</taxon>
        <taxon>Riboviria</taxon>
        <taxon>Orthornavirae</taxon>
        <taxon>Negarnaviricota</taxon>
        <taxon>Polyploviricotina</taxon>
        <taxon>Insthoviricetes</taxon>
        <taxon>Articulavirales</taxon>
        <taxon>Orthomyxoviridae</taxon>
        <taxon>Alphainfluenzavirus</taxon>
        <taxon>Alphainfluenzavirus influenzae</taxon>
        <taxon>Influenza A virus</taxon>
    </lineage>
</organism>